<evidence type="ECO:0000255" key="1"/>
<evidence type="ECO:0000256" key="2">
    <source>
        <dbReference type="SAM" id="MobiDB-lite"/>
    </source>
</evidence>
<evidence type="ECO:0000305" key="3"/>
<keyword id="KW-0472">Membrane</keyword>
<keyword id="KW-1185">Reference proteome</keyword>
<keyword id="KW-0812">Transmembrane</keyword>
<keyword id="KW-1133">Transmembrane helix</keyword>
<organism>
    <name type="scientific">Caenorhabditis elegans</name>
    <dbReference type="NCBI Taxonomy" id="6239"/>
    <lineage>
        <taxon>Eukaryota</taxon>
        <taxon>Metazoa</taxon>
        <taxon>Ecdysozoa</taxon>
        <taxon>Nematoda</taxon>
        <taxon>Chromadorea</taxon>
        <taxon>Rhabditida</taxon>
        <taxon>Rhabditina</taxon>
        <taxon>Rhabditomorpha</taxon>
        <taxon>Rhabditoidea</taxon>
        <taxon>Rhabditidae</taxon>
        <taxon>Peloderinae</taxon>
        <taxon>Caenorhabditis</taxon>
    </lineage>
</organism>
<feature type="chain" id="PRO_0000065278" description="Uncharacterized protein F07F6.2">
    <location>
        <begin position="1"/>
        <end position="261"/>
    </location>
</feature>
<feature type="transmembrane region" description="Helical" evidence="1">
    <location>
        <begin position="15"/>
        <end position="35"/>
    </location>
</feature>
<feature type="transmembrane region" description="Helical" evidence="1">
    <location>
        <begin position="87"/>
        <end position="107"/>
    </location>
</feature>
<feature type="transmembrane region" description="Helical" evidence="1">
    <location>
        <begin position="131"/>
        <end position="151"/>
    </location>
</feature>
<feature type="region of interest" description="Disordered" evidence="2">
    <location>
        <begin position="234"/>
        <end position="261"/>
    </location>
</feature>
<feature type="compositionally biased region" description="Basic and acidic residues" evidence="2">
    <location>
        <begin position="234"/>
        <end position="246"/>
    </location>
</feature>
<protein>
    <recommendedName>
        <fullName>Uncharacterized protein F07F6.2</fullName>
    </recommendedName>
</protein>
<proteinExistence type="predicted"/>
<sequence length="261" mass="31870">MFLRVIDFFQLHLRWYSVGLIFFSFIPIYYSIIVCQPQQFKIDGFELINPVFNKHHSTRSCTSATKSLQNGLIALFIFYALKIYKKVYLIVLYIILIIHFGFEIRNAKSETSRKYIAISTREMFMYYVELLLLYFQNLLLLPYICGGYFLIRHVHRIPSKEEVDRQTLKFKEEARRIKRLMIEEDWHVKEANEDVKNKIEQEGLKRKDMEFEEQLYHLRIEKVKRREQVLKQKLEEKKAKRRQNAERRKKRREIAMEQREQ</sequence>
<dbReference type="EMBL" id="FO081043">
    <property type="protein sequence ID" value="CCD68747.1"/>
    <property type="molecule type" value="Genomic_DNA"/>
</dbReference>
<dbReference type="PIR" id="T15964">
    <property type="entry name" value="T15964"/>
</dbReference>
<dbReference type="RefSeq" id="NP_495030.2">
    <property type="nucleotide sequence ID" value="NM_062629.2"/>
</dbReference>
<dbReference type="SMR" id="Q09303"/>
<dbReference type="FunCoup" id="Q09303">
    <property type="interactions" value="115"/>
</dbReference>
<dbReference type="STRING" id="6239.F07F6.2.1"/>
<dbReference type="PaxDb" id="6239-F07F6.2"/>
<dbReference type="EnsemblMetazoa" id="F07F6.2.1">
    <property type="protein sequence ID" value="F07F6.2.1"/>
    <property type="gene ID" value="WBGene00017216"/>
</dbReference>
<dbReference type="UCSC" id="F07F6.2">
    <property type="organism name" value="c. elegans"/>
</dbReference>
<dbReference type="AGR" id="WB:WBGene00017216"/>
<dbReference type="WormBase" id="F07F6.2">
    <property type="protein sequence ID" value="CE52367"/>
    <property type="gene ID" value="WBGene00017216"/>
</dbReference>
<dbReference type="eggNOG" id="ENOG502TIJ6">
    <property type="taxonomic scope" value="Eukaryota"/>
</dbReference>
<dbReference type="HOGENOM" id="CLU_1066461_0_0_1"/>
<dbReference type="InParanoid" id="Q09303"/>
<dbReference type="OMA" id="ISTREMF"/>
<dbReference type="PRO" id="PR:Q09303"/>
<dbReference type="Proteomes" id="UP000001940">
    <property type="component" value="Chromosome II"/>
</dbReference>
<dbReference type="Bgee" id="WBGene00017216">
    <property type="expression patterns" value="Expressed in adult organism and 3 other cell types or tissues"/>
</dbReference>
<dbReference type="GO" id="GO:0016020">
    <property type="term" value="C:membrane"/>
    <property type="evidence" value="ECO:0007669"/>
    <property type="project" value="UniProtKB-SubCell"/>
</dbReference>
<gene>
    <name type="ORF">F07F6.2</name>
</gene>
<name>YQP2_CAEEL</name>
<reference key="1">
    <citation type="journal article" date="1998" name="Science">
        <title>Genome sequence of the nematode C. elegans: a platform for investigating biology.</title>
        <authorList>
            <consortium name="The C. elegans sequencing consortium"/>
        </authorList>
    </citation>
    <scope>NUCLEOTIDE SEQUENCE [LARGE SCALE GENOMIC DNA]</scope>
    <source>
        <strain>Bristol N2</strain>
    </source>
</reference>
<accession>Q09303</accession>
<comment type="subcellular location">
    <subcellularLocation>
        <location evidence="3">Membrane</location>
        <topology evidence="3">Multi-pass membrane protein</topology>
    </subcellularLocation>
</comment>